<accession>P40713</accession>
<gene>
    <name type="primary">cscK</name>
</gene>
<comment type="catalytic activity">
    <reaction>
        <text>D-fructose + ATP = D-fructose 6-phosphate + ADP + H(+)</text>
        <dbReference type="Rhea" id="RHEA:16125"/>
        <dbReference type="ChEBI" id="CHEBI:15378"/>
        <dbReference type="ChEBI" id="CHEBI:30616"/>
        <dbReference type="ChEBI" id="CHEBI:37721"/>
        <dbReference type="ChEBI" id="CHEBI:61527"/>
        <dbReference type="ChEBI" id="CHEBI:456216"/>
        <dbReference type="EC" id="2.7.1.4"/>
    </reaction>
</comment>
<comment type="similarity">
    <text evidence="1">Belongs to the carbohydrate kinase PfkB family.</text>
</comment>
<protein>
    <recommendedName>
        <fullName>Fructokinase</fullName>
        <ecNumber>2.7.1.4</ecNumber>
    </recommendedName>
</protein>
<evidence type="ECO:0000305" key="1"/>
<sequence>MSAKVWVLGDAVVDLLPESDGRLLPCPGGAPANVAVGIARLGGTSGFIGRVGDDPFGALMQRTLLTEGVDITYLKQDEWHRTSTVLVDLNDQGERSFTFMVRPSADLFLETTDLPCWRHGEWLHLCSIALSAEPSRTSAFTAMTAIRHAGGFVSFDPNIREDLWQDEHLLRLCLRQALQLADVVKLSEEEWRLISGKTQNDRDICALAKEYEIAMLLVTKGAEGVVVCYRGQVHHFAGMSVNCVDSTGAGDAFVAGLLTGLSSTGLSTDEREMRRIIDLAQRCGALAVTAKGAMTALPCRQELESEK</sequence>
<name>SCRK_ECOLX</name>
<dbReference type="EC" id="2.7.1.4"/>
<dbReference type="EMBL" id="X81461">
    <property type="protein sequence ID" value="CAA57218.2"/>
    <property type="molecule type" value="Genomic_DNA"/>
</dbReference>
<dbReference type="PIR" id="S52161">
    <property type="entry name" value="S52161"/>
</dbReference>
<dbReference type="RefSeq" id="WP_001274888.1">
    <property type="nucleotide sequence ID" value="NZ_WOEO01000003.1"/>
</dbReference>
<dbReference type="SMR" id="P40713"/>
<dbReference type="STRING" id="585034.ECIAI1_2427"/>
<dbReference type="GO" id="GO:0005524">
    <property type="term" value="F:ATP binding"/>
    <property type="evidence" value="ECO:0007669"/>
    <property type="project" value="UniProtKB-KW"/>
</dbReference>
<dbReference type="GO" id="GO:0008865">
    <property type="term" value="F:fructokinase activity"/>
    <property type="evidence" value="ECO:0007669"/>
    <property type="project" value="UniProtKB-EC"/>
</dbReference>
<dbReference type="GO" id="GO:0006000">
    <property type="term" value="P:fructose metabolic process"/>
    <property type="evidence" value="ECO:0007669"/>
    <property type="project" value="UniProtKB-ARBA"/>
</dbReference>
<dbReference type="CDD" id="cd01167">
    <property type="entry name" value="bac_FRK"/>
    <property type="match status" value="1"/>
</dbReference>
<dbReference type="Gene3D" id="3.40.1190.20">
    <property type="match status" value="1"/>
</dbReference>
<dbReference type="InterPro" id="IPR002173">
    <property type="entry name" value="Carboh/pur_kinase_PfkB_CS"/>
</dbReference>
<dbReference type="InterPro" id="IPR050306">
    <property type="entry name" value="PfkB_Carbo_kinase"/>
</dbReference>
<dbReference type="InterPro" id="IPR011611">
    <property type="entry name" value="PfkB_dom"/>
</dbReference>
<dbReference type="InterPro" id="IPR002139">
    <property type="entry name" value="Ribo/fructo_kinase"/>
</dbReference>
<dbReference type="InterPro" id="IPR029056">
    <property type="entry name" value="Ribokinase-like"/>
</dbReference>
<dbReference type="NCBIfam" id="NF006957">
    <property type="entry name" value="PRK09434.1"/>
    <property type="match status" value="1"/>
</dbReference>
<dbReference type="PANTHER" id="PTHR43085">
    <property type="entry name" value="HEXOKINASE FAMILY MEMBER"/>
    <property type="match status" value="1"/>
</dbReference>
<dbReference type="PANTHER" id="PTHR43085:SF1">
    <property type="entry name" value="PSEUDOURIDINE KINASE-RELATED"/>
    <property type="match status" value="1"/>
</dbReference>
<dbReference type="Pfam" id="PF00294">
    <property type="entry name" value="PfkB"/>
    <property type="match status" value="1"/>
</dbReference>
<dbReference type="PRINTS" id="PR00990">
    <property type="entry name" value="RIBOKINASE"/>
</dbReference>
<dbReference type="SUPFAM" id="SSF53613">
    <property type="entry name" value="Ribokinase-like"/>
    <property type="match status" value="1"/>
</dbReference>
<dbReference type="PROSITE" id="PS00583">
    <property type="entry name" value="PFKB_KINASES_1"/>
    <property type="match status" value="1"/>
</dbReference>
<dbReference type="PROSITE" id="PS00584">
    <property type="entry name" value="PFKB_KINASES_2"/>
    <property type="match status" value="1"/>
</dbReference>
<reference key="1">
    <citation type="submission" date="2002-05" db="EMBL/GenBank/DDBJ databases">
        <authorList>
            <person name="Bockmann J."/>
        </authorList>
    </citation>
    <scope>NUCLEOTIDE SEQUENCE [GENOMIC DNA]</scope>
    <source>
        <strain>EC3132</strain>
    </source>
</reference>
<feature type="chain" id="PRO_0000080134" description="Fructokinase">
    <location>
        <begin position="1"/>
        <end position="307"/>
    </location>
</feature>
<proteinExistence type="inferred from homology"/>
<keyword id="KW-0067">ATP-binding</keyword>
<keyword id="KW-0119">Carbohydrate metabolism</keyword>
<keyword id="KW-0418">Kinase</keyword>
<keyword id="KW-0547">Nucleotide-binding</keyword>
<keyword id="KW-0808">Transferase</keyword>
<organism>
    <name type="scientific">Escherichia coli</name>
    <dbReference type="NCBI Taxonomy" id="562"/>
    <lineage>
        <taxon>Bacteria</taxon>
        <taxon>Pseudomonadati</taxon>
        <taxon>Pseudomonadota</taxon>
        <taxon>Gammaproteobacteria</taxon>
        <taxon>Enterobacterales</taxon>
        <taxon>Enterobacteriaceae</taxon>
        <taxon>Escherichia</taxon>
    </lineage>
</organism>